<organism>
    <name type="scientific">Shigella boydii serotype 18 (strain CDC 3083-94 / BS512)</name>
    <dbReference type="NCBI Taxonomy" id="344609"/>
    <lineage>
        <taxon>Bacteria</taxon>
        <taxon>Pseudomonadati</taxon>
        <taxon>Pseudomonadota</taxon>
        <taxon>Gammaproteobacteria</taxon>
        <taxon>Enterobacterales</taxon>
        <taxon>Enterobacteriaceae</taxon>
        <taxon>Shigella</taxon>
    </lineage>
</organism>
<protein>
    <recommendedName>
        <fullName evidence="1">N-acetylmuramic acid 6-phosphate etherase</fullName>
        <shortName evidence="1">MurNAc-6-P etherase</shortName>
        <ecNumber evidence="1">4.2.1.126</ecNumber>
    </recommendedName>
    <alternativeName>
        <fullName evidence="1">N-acetylmuramic acid 6-phosphate hydrolase</fullName>
    </alternativeName>
    <alternativeName>
        <fullName evidence="1">N-acetylmuramic acid 6-phosphate lyase</fullName>
    </alternativeName>
</protein>
<reference key="1">
    <citation type="submission" date="2008-05" db="EMBL/GenBank/DDBJ databases">
        <title>Complete sequence of Shigella boydii serotype 18 strain BS512.</title>
        <authorList>
            <person name="Rasko D.A."/>
            <person name="Rosovitz M."/>
            <person name="Maurelli A.T."/>
            <person name="Myers G."/>
            <person name="Seshadri R."/>
            <person name="Cer R."/>
            <person name="Jiang L."/>
            <person name="Ravel J."/>
            <person name="Sebastian Y."/>
        </authorList>
    </citation>
    <scope>NUCLEOTIDE SEQUENCE [LARGE SCALE GENOMIC DNA]</scope>
    <source>
        <strain>CDC 3083-94 / BS512</strain>
    </source>
</reference>
<sequence length="298" mass="31183">MQLEKMITEGSNAASAEIDRVSTLEMCRIINDEDKTVPLAVERVLPDIAAAIDVIHAQVSGGGRLIYLGAGTSGRLGILDASECPPTYGVKPGLVVGLIAGGEYAIQHAVEGAEDSREGGVNDLKNINLTAQDVVVGIAASGRTPYVIAGLEYARQLGCRTVGISCNPGSAVSTTAEFAITPIVGAEVVTGSSRMKAGTAQKLVLNMLSTGLMIKSGKVFGNLMVDVVATNEKLHVRQVNIVKNATGCNAEQAEAALIACERNCKTAIVMVLKNLDAAEAKKRLDQHGGFIRQVLDKE</sequence>
<feature type="chain" id="PRO_1000092319" description="N-acetylmuramic acid 6-phosphate etherase">
    <location>
        <begin position="1"/>
        <end position="298"/>
    </location>
</feature>
<feature type="domain" description="SIS" evidence="1">
    <location>
        <begin position="55"/>
        <end position="218"/>
    </location>
</feature>
<feature type="active site" description="Proton donor" evidence="1">
    <location>
        <position position="83"/>
    </location>
</feature>
<feature type="active site" evidence="1">
    <location>
        <position position="114"/>
    </location>
</feature>
<comment type="function">
    <text evidence="1">Specifically catalyzes the cleavage of the D-lactyl ether substituent of MurNAc 6-phosphate, producing GlcNAc 6-phosphate and D-lactate. Together with AnmK, is also required for the utilization of anhydro-N-acetylmuramic acid (anhMurNAc) either imported from the medium or derived from its own cell wall murein, and thus plays a role in cell wall recycling.</text>
</comment>
<comment type="catalytic activity">
    <reaction evidence="1">
        <text>N-acetyl-D-muramate 6-phosphate + H2O = N-acetyl-D-glucosamine 6-phosphate + (R)-lactate</text>
        <dbReference type="Rhea" id="RHEA:26410"/>
        <dbReference type="ChEBI" id="CHEBI:15377"/>
        <dbReference type="ChEBI" id="CHEBI:16004"/>
        <dbReference type="ChEBI" id="CHEBI:57513"/>
        <dbReference type="ChEBI" id="CHEBI:58722"/>
        <dbReference type="EC" id="4.2.1.126"/>
    </reaction>
</comment>
<comment type="pathway">
    <text evidence="1">Amino-sugar metabolism; 1,6-anhydro-N-acetylmuramate degradation.</text>
</comment>
<comment type="pathway">
    <text evidence="1">Amino-sugar metabolism; N-acetylmuramate degradation.</text>
</comment>
<comment type="pathway">
    <text evidence="1">Cell wall biogenesis; peptidoglycan recycling.</text>
</comment>
<comment type="subunit">
    <text evidence="1">Homodimer.</text>
</comment>
<comment type="induction">
    <text evidence="1">Induced by MurNAc 6-phosphate that releases the repressor MurR from the DNA. Repressed by MurR in the absence of MurNAc 6-phosphate.</text>
</comment>
<comment type="miscellaneous">
    <text evidence="1">A lyase-type mechanism (elimination/hydration) is suggested for the cleavage of the lactyl ether bond of MurNAc 6-phosphate, with the formation of an alpha,beta-unsaturated aldehyde intermediate with (E)-stereochemistry, followed by the syn addition of water to give product.</text>
</comment>
<comment type="similarity">
    <text evidence="1">Belongs to the GCKR-like family. MurNAc-6-P etherase subfamily.</text>
</comment>
<gene>
    <name evidence="1" type="primary">murQ</name>
    <name type="ordered locus">SbBS512_E2800</name>
</gene>
<evidence type="ECO:0000255" key="1">
    <source>
        <dbReference type="HAMAP-Rule" id="MF_00068"/>
    </source>
</evidence>
<keyword id="KW-0119">Carbohydrate metabolism</keyword>
<keyword id="KW-0456">Lyase</keyword>
<keyword id="KW-1185">Reference proteome</keyword>
<dbReference type="EC" id="4.2.1.126" evidence="1"/>
<dbReference type="EMBL" id="CP001063">
    <property type="protein sequence ID" value="ACD07703.1"/>
    <property type="molecule type" value="Genomic_DNA"/>
</dbReference>
<dbReference type="RefSeq" id="WP_001175620.1">
    <property type="nucleotide sequence ID" value="NC_010658.1"/>
</dbReference>
<dbReference type="SMR" id="B2TX17"/>
<dbReference type="STRING" id="344609.SbBS512_E2800"/>
<dbReference type="KEGG" id="sbc:SbBS512_E2800"/>
<dbReference type="HOGENOM" id="CLU_049049_1_1_6"/>
<dbReference type="UniPathway" id="UPA00342"/>
<dbReference type="UniPathway" id="UPA00343"/>
<dbReference type="UniPathway" id="UPA00544"/>
<dbReference type="Proteomes" id="UP000001030">
    <property type="component" value="Chromosome"/>
</dbReference>
<dbReference type="GO" id="GO:0097367">
    <property type="term" value="F:carbohydrate derivative binding"/>
    <property type="evidence" value="ECO:0007669"/>
    <property type="project" value="InterPro"/>
</dbReference>
<dbReference type="GO" id="GO:0016835">
    <property type="term" value="F:carbon-oxygen lyase activity"/>
    <property type="evidence" value="ECO:0007669"/>
    <property type="project" value="UniProtKB-UniRule"/>
</dbReference>
<dbReference type="GO" id="GO:0016803">
    <property type="term" value="F:ether hydrolase activity"/>
    <property type="evidence" value="ECO:0007669"/>
    <property type="project" value="TreeGrafter"/>
</dbReference>
<dbReference type="GO" id="GO:0097175">
    <property type="term" value="P:1,6-anhydro-N-acetyl-beta-muramic acid catabolic process"/>
    <property type="evidence" value="ECO:0007669"/>
    <property type="project" value="UniProtKB-UniRule"/>
</dbReference>
<dbReference type="GO" id="GO:0046348">
    <property type="term" value="P:amino sugar catabolic process"/>
    <property type="evidence" value="ECO:0007669"/>
    <property type="project" value="InterPro"/>
</dbReference>
<dbReference type="GO" id="GO:0097173">
    <property type="term" value="P:N-acetylmuramic acid catabolic process"/>
    <property type="evidence" value="ECO:0007669"/>
    <property type="project" value="UniProtKB-UniPathway"/>
</dbReference>
<dbReference type="GO" id="GO:0009254">
    <property type="term" value="P:peptidoglycan turnover"/>
    <property type="evidence" value="ECO:0007669"/>
    <property type="project" value="UniProtKB-UniRule"/>
</dbReference>
<dbReference type="CDD" id="cd05007">
    <property type="entry name" value="SIS_Etherase"/>
    <property type="match status" value="1"/>
</dbReference>
<dbReference type="FunFam" id="1.10.8.1080:FF:000001">
    <property type="entry name" value="N-acetylmuramic acid 6-phosphate etherase"/>
    <property type="match status" value="1"/>
</dbReference>
<dbReference type="FunFam" id="3.40.50.10490:FF:000014">
    <property type="entry name" value="N-acetylmuramic acid 6-phosphate etherase"/>
    <property type="match status" value="1"/>
</dbReference>
<dbReference type="Gene3D" id="1.10.8.1080">
    <property type="match status" value="1"/>
</dbReference>
<dbReference type="Gene3D" id="3.40.50.10490">
    <property type="entry name" value="Glucose-6-phosphate isomerase like protein, domain 1"/>
    <property type="match status" value="1"/>
</dbReference>
<dbReference type="HAMAP" id="MF_00068">
    <property type="entry name" value="MurQ"/>
    <property type="match status" value="1"/>
</dbReference>
<dbReference type="InterPro" id="IPR005488">
    <property type="entry name" value="Etherase_MurQ"/>
</dbReference>
<dbReference type="InterPro" id="IPR005486">
    <property type="entry name" value="Glucokinase_regulatory_CS"/>
</dbReference>
<dbReference type="InterPro" id="IPR040190">
    <property type="entry name" value="MURQ/GCKR"/>
</dbReference>
<dbReference type="InterPro" id="IPR001347">
    <property type="entry name" value="SIS_dom"/>
</dbReference>
<dbReference type="InterPro" id="IPR046348">
    <property type="entry name" value="SIS_dom_sf"/>
</dbReference>
<dbReference type="NCBIfam" id="TIGR00274">
    <property type="entry name" value="N-acetylmuramic acid 6-phosphate etherase"/>
    <property type="match status" value="1"/>
</dbReference>
<dbReference type="NCBIfam" id="NF003915">
    <property type="entry name" value="PRK05441.1"/>
    <property type="match status" value="1"/>
</dbReference>
<dbReference type="NCBIfam" id="NF009222">
    <property type="entry name" value="PRK12570.1"/>
    <property type="match status" value="1"/>
</dbReference>
<dbReference type="PANTHER" id="PTHR10088">
    <property type="entry name" value="GLUCOKINASE REGULATORY PROTEIN"/>
    <property type="match status" value="1"/>
</dbReference>
<dbReference type="PANTHER" id="PTHR10088:SF4">
    <property type="entry name" value="GLUCOKINASE REGULATORY PROTEIN"/>
    <property type="match status" value="1"/>
</dbReference>
<dbReference type="Pfam" id="PF22645">
    <property type="entry name" value="GKRP_SIS_N"/>
    <property type="match status" value="1"/>
</dbReference>
<dbReference type="SUPFAM" id="SSF53697">
    <property type="entry name" value="SIS domain"/>
    <property type="match status" value="1"/>
</dbReference>
<dbReference type="PROSITE" id="PS01272">
    <property type="entry name" value="GCKR"/>
    <property type="match status" value="1"/>
</dbReference>
<dbReference type="PROSITE" id="PS51464">
    <property type="entry name" value="SIS"/>
    <property type="match status" value="1"/>
</dbReference>
<proteinExistence type="inferred from homology"/>
<name>MURQ_SHIB3</name>
<accession>B2TX17</accession>